<protein>
    <recommendedName>
        <fullName>Nuclear envelope integral membrane protein 2</fullName>
    </recommendedName>
</protein>
<organism>
    <name type="scientific">Mus musculus</name>
    <name type="common">Mouse</name>
    <dbReference type="NCBI Taxonomy" id="10090"/>
    <lineage>
        <taxon>Eukaryota</taxon>
        <taxon>Metazoa</taxon>
        <taxon>Chordata</taxon>
        <taxon>Craniata</taxon>
        <taxon>Vertebrata</taxon>
        <taxon>Euteleostomi</taxon>
        <taxon>Mammalia</taxon>
        <taxon>Eutheria</taxon>
        <taxon>Euarchontoglires</taxon>
        <taxon>Glires</taxon>
        <taxon>Rodentia</taxon>
        <taxon>Myomorpha</taxon>
        <taxon>Muroidea</taxon>
        <taxon>Muridae</taxon>
        <taxon>Murinae</taxon>
        <taxon>Mus</taxon>
        <taxon>Mus</taxon>
    </lineage>
</organism>
<gene>
    <name type="primary">Nemp2</name>
    <name type="synonym">Tmem194b</name>
</gene>
<reference key="1">
    <citation type="journal article" date="2005" name="Science">
        <title>The transcriptional landscape of the mammalian genome.</title>
        <authorList>
            <person name="Carninci P."/>
            <person name="Kasukawa T."/>
            <person name="Katayama S."/>
            <person name="Gough J."/>
            <person name="Frith M.C."/>
            <person name="Maeda N."/>
            <person name="Oyama R."/>
            <person name="Ravasi T."/>
            <person name="Lenhard B."/>
            <person name="Wells C."/>
            <person name="Kodzius R."/>
            <person name="Shimokawa K."/>
            <person name="Bajic V.B."/>
            <person name="Brenner S.E."/>
            <person name="Batalov S."/>
            <person name="Forrest A.R."/>
            <person name="Zavolan M."/>
            <person name="Davis M.J."/>
            <person name="Wilming L.G."/>
            <person name="Aidinis V."/>
            <person name="Allen J.E."/>
            <person name="Ambesi-Impiombato A."/>
            <person name="Apweiler R."/>
            <person name="Aturaliya R.N."/>
            <person name="Bailey T.L."/>
            <person name="Bansal M."/>
            <person name="Baxter L."/>
            <person name="Beisel K.W."/>
            <person name="Bersano T."/>
            <person name="Bono H."/>
            <person name="Chalk A.M."/>
            <person name="Chiu K.P."/>
            <person name="Choudhary V."/>
            <person name="Christoffels A."/>
            <person name="Clutterbuck D.R."/>
            <person name="Crowe M.L."/>
            <person name="Dalla E."/>
            <person name="Dalrymple B.P."/>
            <person name="de Bono B."/>
            <person name="Della Gatta G."/>
            <person name="di Bernardo D."/>
            <person name="Down T."/>
            <person name="Engstrom P."/>
            <person name="Fagiolini M."/>
            <person name="Faulkner G."/>
            <person name="Fletcher C.F."/>
            <person name="Fukushima T."/>
            <person name="Furuno M."/>
            <person name="Futaki S."/>
            <person name="Gariboldi M."/>
            <person name="Georgii-Hemming P."/>
            <person name="Gingeras T.R."/>
            <person name="Gojobori T."/>
            <person name="Green R.E."/>
            <person name="Gustincich S."/>
            <person name="Harbers M."/>
            <person name="Hayashi Y."/>
            <person name="Hensch T.K."/>
            <person name="Hirokawa N."/>
            <person name="Hill D."/>
            <person name="Huminiecki L."/>
            <person name="Iacono M."/>
            <person name="Ikeo K."/>
            <person name="Iwama A."/>
            <person name="Ishikawa T."/>
            <person name="Jakt M."/>
            <person name="Kanapin A."/>
            <person name="Katoh M."/>
            <person name="Kawasawa Y."/>
            <person name="Kelso J."/>
            <person name="Kitamura H."/>
            <person name="Kitano H."/>
            <person name="Kollias G."/>
            <person name="Krishnan S.P."/>
            <person name="Kruger A."/>
            <person name="Kummerfeld S.K."/>
            <person name="Kurochkin I.V."/>
            <person name="Lareau L.F."/>
            <person name="Lazarevic D."/>
            <person name="Lipovich L."/>
            <person name="Liu J."/>
            <person name="Liuni S."/>
            <person name="McWilliam S."/>
            <person name="Madan Babu M."/>
            <person name="Madera M."/>
            <person name="Marchionni L."/>
            <person name="Matsuda H."/>
            <person name="Matsuzawa S."/>
            <person name="Miki H."/>
            <person name="Mignone F."/>
            <person name="Miyake S."/>
            <person name="Morris K."/>
            <person name="Mottagui-Tabar S."/>
            <person name="Mulder N."/>
            <person name="Nakano N."/>
            <person name="Nakauchi H."/>
            <person name="Ng P."/>
            <person name="Nilsson R."/>
            <person name="Nishiguchi S."/>
            <person name="Nishikawa S."/>
            <person name="Nori F."/>
            <person name="Ohara O."/>
            <person name="Okazaki Y."/>
            <person name="Orlando V."/>
            <person name="Pang K.C."/>
            <person name="Pavan W.J."/>
            <person name="Pavesi G."/>
            <person name="Pesole G."/>
            <person name="Petrovsky N."/>
            <person name="Piazza S."/>
            <person name="Reed J."/>
            <person name="Reid J.F."/>
            <person name="Ring B.Z."/>
            <person name="Ringwald M."/>
            <person name="Rost B."/>
            <person name="Ruan Y."/>
            <person name="Salzberg S.L."/>
            <person name="Sandelin A."/>
            <person name="Schneider C."/>
            <person name="Schoenbach C."/>
            <person name="Sekiguchi K."/>
            <person name="Semple C.A."/>
            <person name="Seno S."/>
            <person name="Sessa L."/>
            <person name="Sheng Y."/>
            <person name="Shibata Y."/>
            <person name="Shimada H."/>
            <person name="Shimada K."/>
            <person name="Silva D."/>
            <person name="Sinclair B."/>
            <person name="Sperling S."/>
            <person name="Stupka E."/>
            <person name="Sugiura K."/>
            <person name="Sultana R."/>
            <person name="Takenaka Y."/>
            <person name="Taki K."/>
            <person name="Tammoja K."/>
            <person name="Tan S.L."/>
            <person name="Tang S."/>
            <person name="Taylor M.S."/>
            <person name="Tegner J."/>
            <person name="Teichmann S.A."/>
            <person name="Ueda H.R."/>
            <person name="van Nimwegen E."/>
            <person name="Verardo R."/>
            <person name="Wei C.L."/>
            <person name="Yagi K."/>
            <person name="Yamanishi H."/>
            <person name="Zabarovsky E."/>
            <person name="Zhu S."/>
            <person name="Zimmer A."/>
            <person name="Hide W."/>
            <person name="Bult C."/>
            <person name="Grimmond S.M."/>
            <person name="Teasdale R.D."/>
            <person name="Liu E.T."/>
            <person name="Brusic V."/>
            <person name="Quackenbush J."/>
            <person name="Wahlestedt C."/>
            <person name="Mattick J.S."/>
            <person name="Hume D.A."/>
            <person name="Kai C."/>
            <person name="Sasaki D."/>
            <person name="Tomaru Y."/>
            <person name="Fukuda S."/>
            <person name="Kanamori-Katayama M."/>
            <person name="Suzuki M."/>
            <person name="Aoki J."/>
            <person name="Arakawa T."/>
            <person name="Iida J."/>
            <person name="Imamura K."/>
            <person name="Itoh M."/>
            <person name="Kato T."/>
            <person name="Kawaji H."/>
            <person name="Kawagashira N."/>
            <person name="Kawashima T."/>
            <person name="Kojima M."/>
            <person name="Kondo S."/>
            <person name="Konno H."/>
            <person name="Nakano K."/>
            <person name="Ninomiya N."/>
            <person name="Nishio T."/>
            <person name="Okada M."/>
            <person name="Plessy C."/>
            <person name="Shibata K."/>
            <person name="Shiraki T."/>
            <person name="Suzuki S."/>
            <person name="Tagami M."/>
            <person name="Waki K."/>
            <person name="Watahiki A."/>
            <person name="Okamura-Oho Y."/>
            <person name="Suzuki H."/>
            <person name="Kawai J."/>
            <person name="Hayashizaki Y."/>
        </authorList>
    </citation>
    <scope>NUCLEOTIDE SEQUENCE [LARGE SCALE MRNA] (ISOFORM 2)</scope>
    <source>
        <strain>C57BL/6J</strain>
        <tissue>Bone</tissue>
        <tissue>Head</tissue>
    </source>
</reference>
<reference key="2">
    <citation type="journal article" date="2009" name="PLoS Biol.">
        <title>Lineage-specific biology revealed by a finished genome assembly of the mouse.</title>
        <authorList>
            <person name="Church D.M."/>
            <person name="Goodstadt L."/>
            <person name="Hillier L.W."/>
            <person name="Zody M.C."/>
            <person name="Goldstein S."/>
            <person name="She X."/>
            <person name="Bult C.J."/>
            <person name="Agarwala R."/>
            <person name="Cherry J.L."/>
            <person name="DiCuccio M."/>
            <person name="Hlavina W."/>
            <person name="Kapustin Y."/>
            <person name="Meric P."/>
            <person name="Maglott D."/>
            <person name="Birtle Z."/>
            <person name="Marques A.C."/>
            <person name="Graves T."/>
            <person name="Zhou S."/>
            <person name="Teague B."/>
            <person name="Potamousis K."/>
            <person name="Churas C."/>
            <person name="Place M."/>
            <person name="Herschleb J."/>
            <person name="Runnheim R."/>
            <person name="Forrest D."/>
            <person name="Amos-Landgraf J."/>
            <person name="Schwartz D.C."/>
            <person name="Cheng Z."/>
            <person name="Lindblad-Toh K."/>
            <person name="Eichler E.E."/>
            <person name="Ponting C.P."/>
        </authorList>
    </citation>
    <scope>NUCLEOTIDE SEQUENCE [LARGE SCALE GENOMIC DNA]</scope>
    <source>
        <strain>C57BL/6J</strain>
    </source>
</reference>
<reference key="3">
    <citation type="journal article" date="2020" name="Sci. Adv.">
        <title>The NEMP family supports metazoan fertility and nuclear envelope stiffness.</title>
        <authorList>
            <person name="Tsatskis Y."/>
            <person name="Rosenfeld R."/>
            <person name="Pearson J.D."/>
            <person name="Boswell C."/>
            <person name="Qu Y."/>
            <person name="Kim K."/>
            <person name="Fabian L."/>
            <person name="Mohammad A."/>
            <person name="Wang X."/>
            <person name="Robson M.I."/>
            <person name="Krchma K."/>
            <person name="Wu J."/>
            <person name="Goncalves J."/>
            <person name="Hodzic D."/>
            <person name="Wu S."/>
            <person name="Potter D."/>
            <person name="Pelletier L."/>
            <person name="Dunham W.H."/>
            <person name="Gingras A.C."/>
            <person name="Sun Y."/>
            <person name="Meng J."/>
            <person name="Godt D."/>
            <person name="Schedl T."/>
            <person name="Ciruna B."/>
            <person name="Choi K."/>
            <person name="Perry J.R.B."/>
            <person name="Bremner R."/>
            <person name="Schirmer E.C."/>
            <person name="Brill J.A."/>
            <person name="Jurisicova A."/>
            <person name="McNeill H."/>
        </authorList>
    </citation>
    <scope>TISSUE SPECIFICITY</scope>
</reference>
<accession>Q8CB65</accession>
<accession>Q8C844</accession>
<sequence length="421" mass="47894">MLPRLWWLVLWLQPLATLPASAVHDEEAAMSVPRCKSLKETDLIKTSVSDCYCYNQHSQIQWTYMWSTVQVTVTSPGLLNIVYITGSHNCQHTESILSFIKCVTHNFWAPEEAEEITIVFSPYGETVCFSVKPVGRLLPYIVSVSRNIVDFKLFLVFVTGIFLFLYAKTLSQSPVFYYSSGTVLGILMTLVFVLLMAKKHIPKYSTFGALMIGCWFASVYVLCQLMEDLKWLWYGNRMYILGYVVVVGLCSFAACYSHGPLADEGSRDLLMWTLRLFSLALVYTGVAAPQFAYAVLIVLLFSWSLHYLLRAFSYLRWKMRPWFTAEPQVARYLTDDEYREQAEAATARALEELRQACCRPDFPSWLAVSRLQAPKKFAEFVLGASHLSPEEVSTHEKQYGLGGAFLEEQLFSLQTDSLPAS</sequence>
<name>NEMP2_MOUSE</name>
<proteinExistence type="evidence at transcript level"/>
<keyword id="KW-0025">Alternative splicing</keyword>
<keyword id="KW-0472">Membrane</keyword>
<keyword id="KW-0539">Nucleus</keyword>
<keyword id="KW-1185">Reference proteome</keyword>
<keyword id="KW-0732">Signal</keyword>
<keyword id="KW-0812">Transmembrane</keyword>
<keyword id="KW-1133">Transmembrane helix</keyword>
<dbReference type="EMBL" id="AK036693">
    <property type="protein sequence ID" value="BAC29536.1"/>
    <property type="molecule type" value="mRNA"/>
</dbReference>
<dbReference type="EMBL" id="AK048484">
    <property type="protein sequence ID" value="BAC33349.1"/>
    <property type="molecule type" value="mRNA"/>
</dbReference>
<dbReference type="EMBL" id="AC161876">
    <property type="status" value="NOT_ANNOTATED_CDS"/>
    <property type="molecule type" value="Genomic_DNA"/>
</dbReference>
<dbReference type="CCDS" id="CCDS48257.1">
    <molecule id="Q8CB65-1"/>
</dbReference>
<dbReference type="RefSeq" id="NP_001136119.1">
    <molecule id="Q8CB65-1"/>
    <property type="nucleotide sequence ID" value="NM_001142647.1"/>
</dbReference>
<dbReference type="BioGRID" id="230587">
    <property type="interactions" value="1"/>
</dbReference>
<dbReference type="FunCoup" id="Q8CB65">
    <property type="interactions" value="1731"/>
</dbReference>
<dbReference type="STRING" id="10090.ENSMUSP00000129351"/>
<dbReference type="PhosphoSitePlus" id="Q8CB65"/>
<dbReference type="PaxDb" id="10090-ENSMUSP00000129351"/>
<dbReference type="ProteomicsDB" id="252806">
    <molecule id="Q8CB65-1"/>
</dbReference>
<dbReference type="ProteomicsDB" id="252807">
    <molecule id="Q8CB65-2"/>
</dbReference>
<dbReference type="Antibodypedia" id="77970">
    <property type="antibodies" value="4 antibodies from 4 providers"/>
</dbReference>
<dbReference type="DNASU" id="227094"/>
<dbReference type="Ensembl" id="ENSMUST00000165859.8">
    <molecule id="Q8CB65-1"/>
    <property type="protein sequence ID" value="ENSMUSP00000129351.2"/>
    <property type="gene ID" value="ENSMUSG00000043015.16"/>
</dbReference>
<dbReference type="Ensembl" id="ENSMUST00000185483.7">
    <molecule id="Q8CB65-2"/>
    <property type="protein sequence ID" value="ENSMUSP00000139513.2"/>
    <property type="gene ID" value="ENSMUSG00000043015.16"/>
</dbReference>
<dbReference type="GeneID" id="227094"/>
<dbReference type="KEGG" id="mmu:227094"/>
<dbReference type="UCSC" id="uc011wkp.1">
    <molecule id="Q8CB65-1"/>
    <property type="organism name" value="mouse"/>
</dbReference>
<dbReference type="AGR" id="MGI:2444113"/>
<dbReference type="CTD" id="100131211"/>
<dbReference type="MGI" id="MGI:2444113">
    <property type="gene designation" value="Nemp2"/>
</dbReference>
<dbReference type="VEuPathDB" id="HostDB:ENSMUSG00000043015"/>
<dbReference type="eggNOG" id="KOG3817">
    <property type="taxonomic scope" value="Eukaryota"/>
</dbReference>
<dbReference type="GeneTree" id="ENSGT00390000002174"/>
<dbReference type="HOGENOM" id="CLU_025225_0_0_1"/>
<dbReference type="InParanoid" id="Q8CB65"/>
<dbReference type="OMA" id="IWSTLQV"/>
<dbReference type="OrthoDB" id="509138at2759"/>
<dbReference type="PhylomeDB" id="Q8CB65"/>
<dbReference type="TreeFam" id="TF314831"/>
<dbReference type="BioGRID-ORCS" id="227094">
    <property type="hits" value="1 hit in 78 CRISPR screens"/>
</dbReference>
<dbReference type="ChiTaRS" id="Nemp2">
    <property type="organism name" value="mouse"/>
</dbReference>
<dbReference type="PRO" id="PR:Q8CB65"/>
<dbReference type="Proteomes" id="UP000000589">
    <property type="component" value="Chromosome 1"/>
</dbReference>
<dbReference type="RNAct" id="Q8CB65">
    <property type="molecule type" value="protein"/>
</dbReference>
<dbReference type="Bgee" id="ENSMUSG00000043015">
    <property type="expression patterns" value="Expressed in ureter smooth muscle and 138 other cell types or tissues"/>
</dbReference>
<dbReference type="ExpressionAtlas" id="Q8CB65">
    <property type="expression patterns" value="baseline and differential"/>
</dbReference>
<dbReference type="GO" id="GO:0005637">
    <property type="term" value="C:nuclear inner membrane"/>
    <property type="evidence" value="ECO:0007669"/>
    <property type="project" value="UniProtKB-SubCell"/>
</dbReference>
<dbReference type="InterPro" id="IPR019358">
    <property type="entry name" value="NEMP_fam"/>
</dbReference>
<dbReference type="PANTHER" id="PTHR13598">
    <property type="entry name" value="AT07567P-RELATED"/>
    <property type="match status" value="1"/>
</dbReference>
<dbReference type="PANTHER" id="PTHR13598:SF3">
    <property type="entry name" value="NUCLEAR ENVELOPE INTEGRAL MEMBRANE PROTEIN 2"/>
    <property type="match status" value="1"/>
</dbReference>
<dbReference type="Pfam" id="PF10225">
    <property type="entry name" value="NEMP"/>
    <property type="match status" value="1"/>
</dbReference>
<evidence type="ECO:0000250" key="1">
    <source>
        <dbReference type="UniProtKB" id="B9X187"/>
    </source>
</evidence>
<evidence type="ECO:0000250" key="2">
    <source>
        <dbReference type="UniProtKB" id="Q6ZQE4"/>
    </source>
</evidence>
<evidence type="ECO:0000255" key="3"/>
<evidence type="ECO:0000269" key="4">
    <source>
    </source>
</evidence>
<evidence type="ECO:0000303" key="5">
    <source>
    </source>
</evidence>
<evidence type="ECO:0000305" key="6"/>
<feature type="signal peptide" evidence="3">
    <location>
        <begin position="1"/>
        <end position="22"/>
    </location>
</feature>
<feature type="chain" id="PRO_0000332239" description="Nuclear envelope integral membrane protein 2">
    <location>
        <begin position="23"/>
        <end position="421"/>
    </location>
</feature>
<feature type="transmembrane region" description="Helical" evidence="3">
    <location>
        <begin position="64"/>
        <end position="84"/>
    </location>
</feature>
<feature type="transmembrane region" description="Helical" evidence="3">
    <location>
        <begin position="147"/>
        <end position="167"/>
    </location>
</feature>
<feature type="transmembrane region" description="Helical" evidence="3">
    <location>
        <begin position="175"/>
        <end position="195"/>
    </location>
</feature>
<feature type="transmembrane region" description="Helical" evidence="3">
    <location>
        <begin position="206"/>
        <end position="226"/>
    </location>
</feature>
<feature type="transmembrane region" description="Helical" evidence="3">
    <location>
        <begin position="238"/>
        <end position="258"/>
    </location>
</feature>
<feature type="transmembrane region" description="Helical" evidence="3">
    <location>
        <begin position="281"/>
        <end position="301"/>
    </location>
</feature>
<feature type="splice variant" id="VSP_033359" description="In isoform 2." evidence="5">
    <original>YSTFGA</original>
    <variation>FMFCAS</variation>
    <location>
        <begin position="204"/>
        <end position="209"/>
    </location>
</feature>
<feature type="splice variant" id="VSP_033360" description="In isoform 2." evidence="5">
    <location>
        <begin position="210"/>
        <end position="421"/>
    </location>
</feature>
<feature type="sequence conflict" description="In Ref. 1; BAC33349." evidence="6" ref="1">
    <original>S</original>
    <variation>G</variation>
    <location>
        <position position="143"/>
    </location>
</feature>
<comment type="subcellular location">
    <subcellularLocation>
        <location evidence="2">Nucleus inner membrane</location>
        <topology evidence="3">Multi-pass membrane protein</topology>
        <orientation evidence="1">Nucleoplasmic side</orientation>
    </subcellularLocation>
</comment>
<comment type="alternative products">
    <event type="alternative splicing"/>
    <isoform>
        <id>Q8CB65-1</id>
        <name>1</name>
        <sequence type="displayed"/>
    </isoform>
    <isoform>
        <id>Q8CB65-2</id>
        <name>2</name>
        <sequence type="described" ref="VSP_033359 VSP_033360"/>
    </isoform>
</comment>
<comment type="tissue specificity">
    <text evidence="4">In the ovary, highly expressed in somatic cells.</text>
</comment>
<comment type="similarity">
    <text evidence="6">Belongs to the NEMP family.</text>
</comment>